<comment type="function">
    <text evidence="1">Cell wall formation.</text>
</comment>
<comment type="catalytic activity">
    <reaction evidence="1">
        <text>UDP-N-acetyl-alpha-D-muramate + L-alanine + ATP = UDP-N-acetyl-alpha-D-muramoyl-L-alanine + ADP + phosphate + H(+)</text>
        <dbReference type="Rhea" id="RHEA:23372"/>
        <dbReference type="ChEBI" id="CHEBI:15378"/>
        <dbReference type="ChEBI" id="CHEBI:30616"/>
        <dbReference type="ChEBI" id="CHEBI:43474"/>
        <dbReference type="ChEBI" id="CHEBI:57972"/>
        <dbReference type="ChEBI" id="CHEBI:70757"/>
        <dbReference type="ChEBI" id="CHEBI:83898"/>
        <dbReference type="ChEBI" id="CHEBI:456216"/>
        <dbReference type="EC" id="6.3.2.8"/>
    </reaction>
</comment>
<comment type="pathway">
    <text evidence="1">Cell wall biogenesis; peptidoglycan biosynthesis.</text>
</comment>
<comment type="subcellular location">
    <subcellularLocation>
        <location evidence="1">Cytoplasm</location>
    </subcellularLocation>
</comment>
<comment type="similarity">
    <text evidence="1">Belongs to the MurCDEF family.</text>
</comment>
<organism>
    <name type="scientific">Mycolicibacterium smegmatis (strain ATCC 700084 / mc(2)155)</name>
    <name type="common">Mycobacterium smegmatis</name>
    <dbReference type="NCBI Taxonomy" id="246196"/>
    <lineage>
        <taxon>Bacteria</taxon>
        <taxon>Bacillati</taxon>
        <taxon>Actinomycetota</taxon>
        <taxon>Actinomycetes</taxon>
        <taxon>Mycobacteriales</taxon>
        <taxon>Mycobacteriaceae</taxon>
        <taxon>Mycolicibacterium</taxon>
    </lineage>
</organism>
<keyword id="KW-0067">ATP-binding</keyword>
<keyword id="KW-0131">Cell cycle</keyword>
<keyword id="KW-0132">Cell division</keyword>
<keyword id="KW-0133">Cell shape</keyword>
<keyword id="KW-0961">Cell wall biogenesis/degradation</keyword>
<keyword id="KW-0963">Cytoplasm</keyword>
<keyword id="KW-0436">Ligase</keyword>
<keyword id="KW-0547">Nucleotide-binding</keyword>
<keyword id="KW-0573">Peptidoglycan synthesis</keyword>
<keyword id="KW-1185">Reference proteome</keyword>
<gene>
    <name evidence="1" type="primary">murC</name>
    <name type="ordered locus">MSMEG_4226</name>
    <name type="ordered locus">MSMEI_4126</name>
</gene>
<protein>
    <recommendedName>
        <fullName evidence="1">UDP-N-acetylmuramate--L-alanine ligase</fullName>
        <ecNumber evidence="1">6.3.2.8</ecNumber>
    </recommendedName>
    <alternativeName>
        <fullName evidence="1">UDP-N-acetylmuramoyl-L-alanine synthetase</fullName>
    </alternativeName>
</protein>
<accession>A0R015</accession>
<accession>I7FPD9</accession>
<proteinExistence type="inferred from homology"/>
<evidence type="ECO:0000255" key="1">
    <source>
        <dbReference type="HAMAP-Rule" id="MF_00046"/>
    </source>
</evidence>
<dbReference type="EC" id="6.3.2.8" evidence="1"/>
<dbReference type="EMBL" id="CP000480">
    <property type="protein sequence ID" value="ABK71244.1"/>
    <property type="molecule type" value="Genomic_DNA"/>
</dbReference>
<dbReference type="EMBL" id="CP001663">
    <property type="protein sequence ID" value="AFP40583.1"/>
    <property type="molecule type" value="Genomic_DNA"/>
</dbReference>
<dbReference type="RefSeq" id="WP_011729655.1">
    <property type="nucleotide sequence ID" value="NZ_SIJM01000003.1"/>
</dbReference>
<dbReference type="RefSeq" id="YP_888503.1">
    <property type="nucleotide sequence ID" value="NC_008596.1"/>
</dbReference>
<dbReference type="SMR" id="A0R015"/>
<dbReference type="STRING" id="246196.MSMEG_4226"/>
<dbReference type="PaxDb" id="246196-MSMEI_4126"/>
<dbReference type="GeneID" id="93458944"/>
<dbReference type="KEGG" id="msb:LJ00_20950"/>
<dbReference type="KEGG" id="msg:MSMEI_4126"/>
<dbReference type="KEGG" id="msm:MSMEG_4226"/>
<dbReference type="PATRIC" id="fig|246196.19.peg.4146"/>
<dbReference type="eggNOG" id="COG0773">
    <property type="taxonomic scope" value="Bacteria"/>
</dbReference>
<dbReference type="OrthoDB" id="9804126at2"/>
<dbReference type="UniPathway" id="UPA00219"/>
<dbReference type="Proteomes" id="UP000000757">
    <property type="component" value="Chromosome"/>
</dbReference>
<dbReference type="Proteomes" id="UP000006158">
    <property type="component" value="Chromosome"/>
</dbReference>
<dbReference type="GO" id="GO:0005737">
    <property type="term" value="C:cytoplasm"/>
    <property type="evidence" value="ECO:0007669"/>
    <property type="project" value="UniProtKB-SubCell"/>
</dbReference>
<dbReference type="GO" id="GO:0005524">
    <property type="term" value="F:ATP binding"/>
    <property type="evidence" value="ECO:0007669"/>
    <property type="project" value="UniProtKB-UniRule"/>
</dbReference>
<dbReference type="GO" id="GO:0008763">
    <property type="term" value="F:UDP-N-acetylmuramate-L-alanine ligase activity"/>
    <property type="evidence" value="ECO:0007669"/>
    <property type="project" value="UniProtKB-UniRule"/>
</dbReference>
<dbReference type="GO" id="GO:0051301">
    <property type="term" value="P:cell division"/>
    <property type="evidence" value="ECO:0007669"/>
    <property type="project" value="UniProtKB-KW"/>
</dbReference>
<dbReference type="GO" id="GO:0071555">
    <property type="term" value="P:cell wall organization"/>
    <property type="evidence" value="ECO:0007669"/>
    <property type="project" value="UniProtKB-KW"/>
</dbReference>
<dbReference type="GO" id="GO:0009252">
    <property type="term" value="P:peptidoglycan biosynthetic process"/>
    <property type="evidence" value="ECO:0007669"/>
    <property type="project" value="UniProtKB-UniRule"/>
</dbReference>
<dbReference type="GO" id="GO:0008360">
    <property type="term" value="P:regulation of cell shape"/>
    <property type="evidence" value="ECO:0007669"/>
    <property type="project" value="UniProtKB-KW"/>
</dbReference>
<dbReference type="FunFam" id="3.40.50.720:FF:000046">
    <property type="entry name" value="UDP-N-acetylmuramate--L-alanine ligase"/>
    <property type="match status" value="1"/>
</dbReference>
<dbReference type="Gene3D" id="3.90.190.20">
    <property type="entry name" value="Mur ligase, C-terminal domain"/>
    <property type="match status" value="1"/>
</dbReference>
<dbReference type="Gene3D" id="3.40.1190.10">
    <property type="entry name" value="Mur-like, catalytic domain"/>
    <property type="match status" value="1"/>
</dbReference>
<dbReference type="Gene3D" id="3.40.50.720">
    <property type="entry name" value="NAD(P)-binding Rossmann-like Domain"/>
    <property type="match status" value="1"/>
</dbReference>
<dbReference type="HAMAP" id="MF_00046">
    <property type="entry name" value="MurC"/>
    <property type="match status" value="1"/>
</dbReference>
<dbReference type="InterPro" id="IPR036565">
    <property type="entry name" value="Mur-like_cat_sf"/>
</dbReference>
<dbReference type="InterPro" id="IPR004101">
    <property type="entry name" value="Mur_ligase_C"/>
</dbReference>
<dbReference type="InterPro" id="IPR036615">
    <property type="entry name" value="Mur_ligase_C_dom_sf"/>
</dbReference>
<dbReference type="InterPro" id="IPR013221">
    <property type="entry name" value="Mur_ligase_cen"/>
</dbReference>
<dbReference type="InterPro" id="IPR000713">
    <property type="entry name" value="Mur_ligase_N"/>
</dbReference>
<dbReference type="InterPro" id="IPR050061">
    <property type="entry name" value="MurCDEF_pg_biosynth"/>
</dbReference>
<dbReference type="InterPro" id="IPR005758">
    <property type="entry name" value="UDP-N-AcMur_Ala_ligase_MurC"/>
</dbReference>
<dbReference type="NCBIfam" id="TIGR01082">
    <property type="entry name" value="murC"/>
    <property type="match status" value="1"/>
</dbReference>
<dbReference type="PANTHER" id="PTHR43445:SF3">
    <property type="entry name" value="UDP-N-ACETYLMURAMATE--L-ALANINE LIGASE"/>
    <property type="match status" value="1"/>
</dbReference>
<dbReference type="PANTHER" id="PTHR43445">
    <property type="entry name" value="UDP-N-ACETYLMURAMATE--L-ALANINE LIGASE-RELATED"/>
    <property type="match status" value="1"/>
</dbReference>
<dbReference type="Pfam" id="PF01225">
    <property type="entry name" value="Mur_ligase"/>
    <property type="match status" value="1"/>
</dbReference>
<dbReference type="Pfam" id="PF02875">
    <property type="entry name" value="Mur_ligase_C"/>
    <property type="match status" value="1"/>
</dbReference>
<dbReference type="Pfam" id="PF08245">
    <property type="entry name" value="Mur_ligase_M"/>
    <property type="match status" value="1"/>
</dbReference>
<dbReference type="SUPFAM" id="SSF51984">
    <property type="entry name" value="MurCD N-terminal domain"/>
    <property type="match status" value="1"/>
</dbReference>
<dbReference type="SUPFAM" id="SSF53623">
    <property type="entry name" value="MurD-like peptide ligases, catalytic domain"/>
    <property type="match status" value="1"/>
</dbReference>
<dbReference type="SUPFAM" id="SSF53244">
    <property type="entry name" value="MurD-like peptide ligases, peptide-binding domain"/>
    <property type="match status" value="1"/>
</dbReference>
<feature type="chain" id="PRO_1000004372" description="UDP-N-acetylmuramate--L-alanine ligase">
    <location>
        <begin position="1"/>
        <end position="482"/>
    </location>
</feature>
<feature type="binding site" evidence="1">
    <location>
        <begin position="122"/>
        <end position="128"/>
    </location>
    <ligand>
        <name>ATP</name>
        <dbReference type="ChEBI" id="CHEBI:30616"/>
    </ligand>
</feature>
<reference key="1">
    <citation type="submission" date="2006-10" db="EMBL/GenBank/DDBJ databases">
        <authorList>
            <person name="Fleischmann R.D."/>
            <person name="Dodson R.J."/>
            <person name="Haft D.H."/>
            <person name="Merkel J.S."/>
            <person name="Nelson W.C."/>
            <person name="Fraser C.M."/>
        </authorList>
    </citation>
    <scope>NUCLEOTIDE SEQUENCE [LARGE SCALE GENOMIC DNA]</scope>
    <source>
        <strain>ATCC 700084 / mc(2)155</strain>
    </source>
</reference>
<reference key="2">
    <citation type="journal article" date="2007" name="Genome Biol.">
        <title>Interrupted coding sequences in Mycobacterium smegmatis: authentic mutations or sequencing errors?</title>
        <authorList>
            <person name="Deshayes C."/>
            <person name="Perrodou E."/>
            <person name="Gallien S."/>
            <person name="Euphrasie D."/>
            <person name="Schaeffer C."/>
            <person name="Van-Dorsselaer A."/>
            <person name="Poch O."/>
            <person name="Lecompte O."/>
            <person name="Reyrat J.-M."/>
        </authorList>
    </citation>
    <scope>NUCLEOTIDE SEQUENCE [LARGE SCALE GENOMIC DNA]</scope>
    <source>
        <strain>ATCC 700084 / mc(2)155</strain>
    </source>
</reference>
<reference key="3">
    <citation type="journal article" date="2009" name="Genome Res.">
        <title>Ortho-proteogenomics: multiple proteomes investigation through orthology and a new MS-based protocol.</title>
        <authorList>
            <person name="Gallien S."/>
            <person name="Perrodou E."/>
            <person name="Carapito C."/>
            <person name="Deshayes C."/>
            <person name="Reyrat J.-M."/>
            <person name="Van Dorsselaer A."/>
            <person name="Poch O."/>
            <person name="Schaeffer C."/>
            <person name="Lecompte O."/>
        </authorList>
    </citation>
    <scope>NUCLEOTIDE SEQUENCE [LARGE SCALE GENOMIC DNA]</scope>
    <source>
        <strain>ATCC 700084 / mc(2)155</strain>
    </source>
</reference>
<sequence length="482" mass="49804">MTGISLPPELQRVHMVGIGGAGMSGVARILLDRGGLVSGSDAKESRGVVALRARGAEIRIGHDASSLDLLPGGPTAVVTTHAAIPKTNPELVEARKRGIPVILRPVVLAKLMTGYTTLMVTGTHGKTTTTSMLIVALQHSGFDPSFAVGGELGEAGTNAHHGSGTTFVAEADESDGSLLEYTPNVAVVTNIEADHLDFFGSEQAYTAVFDSFVERIAPGGALVVCTDDPGAAALADRTDALGIRVLRYGSTGDNLAGTLLSWEQQGTGAVAHIRLAGEHNPRAVRLSVPGRHMALNALAALLAAREIGAPTDSVLDGLAGFEGVRRRFELVGTAAGARVFDDYAHHPTEVRATLEAARTVVDQNGGRVVVAFQPHLYSRTATFAHEFGAALSVADQVVVLDVYAAREQPMAGVSGATVADHVTAPVTYVPDFSAVAAHVASIARSGDVILTMGAGDVTMLGGEILSELRLKDNRGMPGAGAS</sequence>
<name>MURC_MYCS2</name>